<dbReference type="EC" id="3.4.24.-"/>
<dbReference type="EMBL" id="BA000043">
    <property type="protein sequence ID" value="BAD75541.1"/>
    <property type="molecule type" value="Genomic_DNA"/>
</dbReference>
<dbReference type="SMR" id="Q5L0J5"/>
<dbReference type="STRING" id="235909.GK1256"/>
<dbReference type="MEROPS" id="M50.011"/>
<dbReference type="KEGG" id="gka:GK1256"/>
<dbReference type="eggNOG" id="COG0750">
    <property type="taxonomic scope" value="Bacteria"/>
</dbReference>
<dbReference type="HOGENOM" id="CLU_025778_1_0_9"/>
<dbReference type="Proteomes" id="UP000001172">
    <property type="component" value="Chromosome"/>
</dbReference>
<dbReference type="GO" id="GO:0005886">
    <property type="term" value="C:plasma membrane"/>
    <property type="evidence" value="ECO:0007669"/>
    <property type="project" value="UniProtKB-SubCell"/>
</dbReference>
<dbReference type="GO" id="GO:0046872">
    <property type="term" value="F:metal ion binding"/>
    <property type="evidence" value="ECO:0007669"/>
    <property type="project" value="UniProtKB-KW"/>
</dbReference>
<dbReference type="GO" id="GO:0004222">
    <property type="term" value="F:metalloendopeptidase activity"/>
    <property type="evidence" value="ECO:0007669"/>
    <property type="project" value="InterPro"/>
</dbReference>
<dbReference type="GO" id="GO:0006508">
    <property type="term" value="P:proteolysis"/>
    <property type="evidence" value="ECO:0007669"/>
    <property type="project" value="UniProtKB-KW"/>
</dbReference>
<dbReference type="CDD" id="cd23081">
    <property type="entry name" value="cpPDZ_EcRseP-like"/>
    <property type="match status" value="1"/>
</dbReference>
<dbReference type="CDD" id="cd06163">
    <property type="entry name" value="S2P-M50_PDZ_RseP-like"/>
    <property type="match status" value="1"/>
</dbReference>
<dbReference type="Gene3D" id="2.30.42.10">
    <property type="match status" value="1"/>
</dbReference>
<dbReference type="InterPro" id="IPR001478">
    <property type="entry name" value="PDZ"/>
</dbReference>
<dbReference type="InterPro" id="IPR036034">
    <property type="entry name" value="PDZ_sf"/>
</dbReference>
<dbReference type="InterPro" id="IPR004387">
    <property type="entry name" value="Pept_M50_Zn"/>
</dbReference>
<dbReference type="InterPro" id="IPR008915">
    <property type="entry name" value="Peptidase_M50"/>
</dbReference>
<dbReference type="NCBIfam" id="TIGR00054">
    <property type="entry name" value="RIP metalloprotease RseP"/>
    <property type="match status" value="1"/>
</dbReference>
<dbReference type="PANTHER" id="PTHR42837:SF2">
    <property type="entry name" value="MEMBRANE METALLOPROTEASE ARASP2, CHLOROPLASTIC-RELATED"/>
    <property type="match status" value="1"/>
</dbReference>
<dbReference type="PANTHER" id="PTHR42837">
    <property type="entry name" value="REGULATOR OF SIGMA-E PROTEASE RSEP"/>
    <property type="match status" value="1"/>
</dbReference>
<dbReference type="Pfam" id="PF13180">
    <property type="entry name" value="PDZ_2"/>
    <property type="match status" value="1"/>
</dbReference>
<dbReference type="Pfam" id="PF02163">
    <property type="entry name" value="Peptidase_M50"/>
    <property type="match status" value="1"/>
</dbReference>
<dbReference type="SMART" id="SM00228">
    <property type="entry name" value="PDZ"/>
    <property type="match status" value="1"/>
</dbReference>
<dbReference type="SUPFAM" id="SSF50156">
    <property type="entry name" value="PDZ domain-like"/>
    <property type="match status" value="1"/>
</dbReference>
<dbReference type="PROSITE" id="PS50106">
    <property type="entry name" value="PDZ"/>
    <property type="match status" value="1"/>
</dbReference>
<dbReference type="PROSITE" id="PS00142">
    <property type="entry name" value="ZINC_PROTEASE"/>
    <property type="match status" value="1"/>
</dbReference>
<comment type="function">
    <text evidence="1">Is responsible for Site-2 cleavage of the RsiW anti-sigma factor. This results, after a third proteolytic step catalyzed by the ClpXP protease, in the release of SigW and the transcription activation of the genes under the control of the sigma-W factor (By similarity).</text>
</comment>
<comment type="cofactor">
    <cofactor evidence="1">
        <name>Zn(2+)</name>
        <dbReference type="ChEBI" id="CHEBI:29105"/>
    </cofactor>
</comment>
<comment type="subcellular location">
    <subcellularLocation>
        <location evidence="5">Cell membrane</location>
        <topology evidence="5">Multi-pass membrane protein</topology>
    </subcellularLocation>
</comment>
<comment type="similarity">
    <text evidence="5">Belongs to the peptidase M50B family.</text>
</comment>
<sequence length="421" mass="46681">MVETLESIISFIVVFGALVFFHELGHLLLAKRAGILCREFAIGFGPKVFSFKKNETVYTIRLLPLGGFVRMAGEDPETIELKRGQVVGLLLDESGQVEKIVLNHKDDYPNIRVVEVEEADLEHGMYVTGYTDGERFERFTVKEPAFFVVDRQEIQIAPYHRQFAAKTLGQRTMTILAGPLANFLLSLVVFIIIGLLQGYPVDKPVIGELTPEGAARAAGLKQGDKVIAINGERMETWTEIVNTIRAHPGEPLQFQIERNGKERSVTVTPEAKTVQGETIGLIGVYQPMEKSVLGSIKQGLVETYYWTREIVTGLGQLITGQFQLDMLSGPVGIAVSTGKVAESGIYYLMKWGAILSINLGIVNLLPLPALDGGRLLFFAIEAVRGKPVDRQKEGMVHFIGFALLMLLMLVVTWNDIQKFFL</sequence>
<protein>
    <recommendedName>
        <fullName>Zinc metalloprotease RasP</fullName>
        <ecNumber>3.4.24.-</ecNumber>
    </recommendedName>
    <alternativeName>
        <fullName>Regulating alternative sigma factor protease</fullName>
    </alternativeName>
    <alternativeName>
        <fullName>Regulating anti-sigma-W factor activity protease</fullName>
    </alternativeName>
</protein>
<evidence type="ECO:0000250" key="1"/>
<evidence type="ECO:0000255" key="2"/>
<evidence type="ECO:0000255" key="3">
    <source>
        <dbReference type="PROSITE-ProRule" id="PRU00143"/>
    </source>
</evidence>
<evidence type="ECO:0000255" key="4">
    <source>
        <dbReference type="PROSITE-ProRule" id="PRU10095"/>
    </source>
</evidence>
<evidence type="ECO:0000305" key="5"/>
<feature type="chain" id="PRO_0000248827" description="Zinc metalloprotease RasP">
    <location>
        <begin position="1"/>
        <end position="421"/>
    </location>
</feature>
<feature type="transmembrane region" description="Helical" evidence="2">
    <location>
        <begin position="8"/>
        <end position="28"/>
    </location>
</feature>
<feature type="transmembrane region" description="Helical" evidence="2">
    <location>
        <begin position="175"/>
        <end position="195"/>
    </location>
</feature>
<feature type="transmembrane region" description="Helical" evidence="2">
    <location>
        <begin position="345"/>
        <end position="365"/>
    </location>
</feature>
<feature type="transmembrane region" description="Helical" evidence="2">
    <location>
        <begin position="393"/>
        <end position="413"/>
    </location>
</feature>
<feature type="domain" description="PDZ" evidence="3">
    <location>
        <begin position="186"/>
        <end position="271"/>
    </location>
</feature>
<feature type="active site" evidence="4">
    <location>
        <position position="23"/>
    </location>
</feature>
<feature type="binding site" evidence="4">
    <location>
        <position position="22"/>
    </location>
    <ligand>
        <name>Zn(2+)</name>
        <dbReference type="ChEBI" id="CHEBI:29105"/>
        <note>catalytic</note>
    </ligand>
</feature>
<feature type="binding site" evidence="4">
    <location>
        <position position="26"/>
    </location>
    <ligand>
        <name>Zn(2+)</name>
        <dbReference type="ChEBI" id="CHEBI:29105"/>
        <note>catalytic</note>
    </ligand>
</feature>
<gene>
    <name type="primary">rasP</name>
    <name type="ordered locus">GK1256</name>
</gene>
<proteinExistence type="inferred from homology"/>
<organism>
    <name type="scientific">Geobacillus kaustophilus (strain HTA426)</name>
    <dbReference type="NCBI Taxonomy" id="235909"/>
    <lineage>
        <taxon>Bacteria</taxon>
        <taxon>Bacillati</taxon>
        <taxon>Bacillota</taxon>
        <taxon>Bacilli</taxon>
        <taxon>Bacillales</taxon>
        <taxon>Anoxybacillaceae</taxon>
        <taxon>Geobacillus</taxon>
        <taxon>Geobacillus thermoleovorans group</taxon>
    </lineage>
</organism>
<accession>Q5L0J5</accession>
<keyword id="KW-1003">Cell membrane</keyword>
<keyword id="KW-0378">Hydrolase</keyword>
<keyword id="KW-0472">Membrane</keyword>
<keyword id="KW-0479">Metal-binding</keyword>
<keyword id="KW-0482">Metalloprotease</keyword>
<keyword id="KW-0645">Protease</keyword>
<keyword id="KW-1185">Reference proteome</keyword>
<keyword id="KW-0812">Transmembrane</keyword>
<keyword id="KW-1133">Transmembrane helix</keyword>
<keyword id="KW-0862">Zinc</keyword>
<reference key="1">
    <citation type="journal article" date="2004" name="Nucleic Acids Res.">
        <title>Thermoadaptation trait revealed by the genome sequence of thermophilic Geobacillus kaustophilus.</title>
        <authorList>
            <person name="Takami H."/>
            <person name="Takaki Y."/>
            <person name="Chee G.-J."/>
            <person name="Nishi S."/>
            <person name="Shimamura S."/>
            <person name="Suzuki H."/>
            <person name="Matsui S."/>
            <person name="Uchiyama I."/>
        </authorList>
    </citation>
    <scope>NUCLEOTIDE SEQUENCE [LARGE SCALE GENOMIC DNA]</scope>
    <source>
        <strain>HTA426</strain>
    </source>
</reference>
<name>RASP_GEOKA</name>